<sequence length="312" mass="32999">MSIEHTSHDPSKPDPAKARTLAAALPWLKRYHGKIVVVKYGGNAMTDETLKRAFAEDIAFLRFAGFKPVVVHGGGPQISTMLDRLGIRSEFRGGLRVTTPEAMDVVRMVLVGQVQRELVGLINEHGPLAVGCSGEDAGLFTAEPANTVIDGEEVDLGLVGEVARVRPESVLDLIEAGRIPVVSSVAPDADGQVHNVNADSAAAALAVALGAEKLLVLTDVEGLYLDWPSSDDVIGEISPEALEEILPTLASGMVPKMGACLQAVRNGVPRATVVDGREPHAVLLELFTNEGVGTQVLPGVETKTRKARDTQS</sequence>
<protein>
    <recommendedName>
        <fullName evidence="1">Acetylglutamate kinase</fullName>
        <ecNumber evidence="1">2.7.2.8</ecNumber>
    </recommendedName>
    <alternativeName>
        <fullName evidence="1">N-acetyl-L-glutamate 5-phosphotransferase</fullName>
    </alternativeName>
    <alternativeName>
        <fullName evidence="1">NAG kinase</fullName>
        <shortName evidence="1">NAGK</shortName>
    </alternativeName>
</protein>
<proteinExistence type="inferred from homology"/>
<accession>A1SJI9</accession>
<dbReference type="EC" id="2.7.2.8" evidence="1"/>
<dbReference type="EMBL" id="CP000509">
    <property type="protein sequence ID" value="ABL81974.1"/>
    <property type="molecule type" value="Genomic_DNA"/>
</dbReference>
<dbReference type="RefSeq" id="WP_011755915.1">
    <property type="nucleotide sequence ID" value="NC_008699.1"/>
</dbReference>
<dbReference type="SMR" id="A1SJI9"/>
<dbReference type="STRING" id="196162.Noca_2470"/>
<dbReference type="KEGG" id="nca:Noca_2470"/>
<dbReference type="eggNOG" id="COG0548">
    <property type="taxonomic scope" value="Bacteria"/>
</dbReference>
<dbReference type="HOGENOM" id="CLU_053680_0_1_11"/>
<dbReference type="UniPathway" id="UPA00068">
    <property type="reaction ID" value="UER00107"/>
</dbReference>
<dbReference type="Proteomes" id="UP000000640">
    <property type="component" value="Chromosome"/>
</dbReference>
<dbReference type="GO" id="GO:0005737">
    <property type="term" value="C:cytoplasm"/>
    <property type="evidence" value="ECO:0007669"/>
    <property type="project" value="UniProtKB-SubCell"/>
</dbReference>
<dbReference type="GO" id="GO:0003991">
    <property type="term" value="F:acetylglutamate kinase activity"/>
    <property type="evidence" value="ECO:0007669"/>
    <property type="project" value="UniProtKB-UniRule"/>
</dbReference>
<dbReference type="GO" id="GO:0005524">
    <property type="term" value="F:ATP binding"/>
    <property type="evidence" value="ECO:0007669"/>
    <property type="project" value="UniProtKB-UniRule"/>
</dbReference>
<dbReference type="GO" id="GO:0042450">
    <property type="term" value="P:arginine biosynthetic process via ornithine"/>
    <property type="evidence" value="ECO:0007669"/>
    <property type="project" value="UniProtKB-UniRule"/>
</dbReference>
<dbReference type="GO" id="GO:0006526">
    <property type="term" value="P:L-arginine biosynthetic process"/>
    <property type="evidence" value="ECO:0007669"/>
    <property type="project" value="UniProtKB-UniPathway"/>
</dbReference>
<dbReference type="CDD" id="cd04250">
    <property type="entry name" value="AAK_NAGK-C"/>
    <property type="match status" value="1"/>
</dbReference>
<dbReference type="FunFam" id="3.40.1160.10:FF:000004">
    <property type="entry name" value="Acetylglutamate kinase"/>
    <property type="match status" value="1"/>
</dbReference>
<dbReference type="Gene3D" id="3.40.1160.10">
    <property type="entry name" value="Acetylglutamate kinase-like"/>
    <property type="match status" value="1"/>
</dbReference>
<dbReference type="HAMAP" id="MF_00082">
    <property type="entry name" value="ArgB"/>
    <property type="match status" value="1"/>
</dbReference>
<dbReference type="InterPro" id="IPR036393">
    <property type="entry name" value="AceGlu_kinase-like_sf"/>
</dbReference>
<dbReference type="InterPro" id="IPR004662">
    <property type="entry name" value="AcgluKinase_fam"/>
</dbReference>
<dbReference type="InterPro" id="IPR037528">
    <property type="entry name" value="ArgB"/>
</dbReference>
<dbReference type="InterPro" id="IPR001048">
    <property type="entry name" value="Asp/Glu/Uridylate_kinase"/>
</dbReference>
<dbReference type="InterPro" id="IPR001057">
    <property type="entry name" value="Glu/AcGlu_kinase"/>
</dbReference>
<dbReference type="InterPro" id="IPR041727">
    <property type="entry name" value="NAGK-C"/>
</dbReference>
<dbReference type="NCBIfam" id="TIGR00761">
    <property type="entry name" value="argB"/>
    <property type="match status" value="1"/>
</dbReference>
<dbReference type="PANTHER" id="PTHR23342">
    <property type="entry name" value="N-ACETYLGLUTAMATE SYNTHASE"/>
    <property type="match status" value="1"/>
</dbReference>
<dbReference type="PANTHER" id="PTHR23342:SF0">
    <property type="entry name" value="N-ACETYLGLUTAMATE SYNTHASE, MITOCHONDRIAL"/>
    <property type="match status" value="1"/>
</dbReference>
<dbReference type="Pfam" id="PF00696">
    <property type="entry name" value="AA_kinase"/>
    <property type="match status" value="1"/>
</dbReference>
<dbReference type="PIRSF" id="PIRSF000728">
    <property type="entry name" value="NAGK"/>
    <property type="match status" value="1"/>
</dbReference>
<dbReference type="PRINTS" id="PR00474">
    <property type="entry name" value="GLU5KINASE"/>
</dbReference>
<dbReference type="SUPFAM" id="SSF53633">
    <property type="entry name" value="Carbamate kinase-like"/>
    <property type="match status" value="1"/>
</dbReference>
<comment type="function">
    <text evidence="1">Catalyzes the ATP-dependent phosphorylation of N-acetyl-L-glutamate.</text>
</comment>
<comment type="catalytic activity">
    <reaction evidence="1">
        <text>N-acetyl-L-glutamate + ATP = N-acetyl-L-glutamyl 5-phosphate + ADP</text>
        <dbReference type="Rhea" id="RHEA:14629"/>
        <dbReference type="ChEBI" id="CHEBI:30616"/>
        <dbReference type="ChEBI" id="CHEBI:44337"/>
        <dbReference type="ChEBI" id="CHEBI:57936"/>
        <dbReference type="ChEBI" id="CHEBI:456216"/>
        <dbReference type="EC" id="2.7.2.8"/>
    </reaction>
</comment>
<comment type="pathway">
    <text evidence="1">Amino-acid biosynthesis; L-arginine biosynthesis; N(2)-acetyl-L-ornithine from L-glutamate: step 2/4.</text>
</comment>
<comment type="subcellular location">
    <subcellularLocation>
        <location evidence="1">Cytoplasm</location>
    </subcellularLocation>
</comment>
<comment type="similarity">
    <text evidence="1">Belongs to the acetylglutamate kinase family. ArgB subfamily.</text>
</comment>
<evidence type="ECO:0000255" key="1">
    <source>
        <dbReference type="HAMAP-Rule" id="MF_00082"/>
    </source>
</evidence>
<organism>
    <name type="scientific">Nocardioides sp. (strain ATCC BAA-499 / JS614)</name>
    <dbReference type="NCBI Taxonomy" id="196162"/>
    <lineage>
        <taxon>Bacteria</taxon>
        <taxon>Bacillati</taxon>
        <taxon>Actinomycetota</taxon>
        <taxon>Actinomycetes</taxon>
        <taxon>Propionibacteriales</taxon>
        <taxon>Nocardioidaceae</taxon>
        <taxon>Nocardioides</taxon>
    </lineage>
</organism>
<reference key="1">
    <citation type="submission" date="2006-12" db="EMBL/GenBank/DDBJ databases">
        <title>Complete sequence of chromosome 1 of Nocardioides sp. JS614.</title>
        <authorList>
            <person name="Copeland A."/>
            <person name="Lucas S."/>
            <person name="Lapidus A."/>
            <person name="Barry K."/>
            <person name="Detter J.C."/>
            <person name="Glavina del Rio T."/>
            <person name="Hammon N."/>
            <person name="Israni S."/>
            <person name="Dalin E."/>
            <person name="Tice H."/>
            <person name="Pitluck S."/>
            <person name="Thompson L.S."/>
            <person name="Brettin T."/>
            <person name="Bruce D."/>
            <person name="Han C."/>
            <person name="Tapia R."/>
            <person name="Schmutz J."/>
            <person name="Larimer F."/>
            <person name="Land M."/>
            <person name="Hauser L."/>
            <person name="Kyrpides N."/>
            <person name="Kim E."/>
            <person name="Mattes T."/>
            <person name="Gossett J."/>
            <person name="Richardson P."/>
        </authorList>
    </citation>
    <scope>NUCLEOTIDE SEQUENCE [LARGE SCALE GENOMIC DNA]</scope>
    <source>
        <strain>ATCC BAA-499 / JS614</strain>
    </source>
</reference>
<gene>
    <name evidence="1" type="primary">argB</name>
    <name type="ordered locus">Noca_2470</name>
</gene>
<keyword id="KW-0028">Amino-acid biosynthesis</keyword>
<keyword id="KW-0055">Arginine biosynthesis</keyword>
<keyword id="KW-0067">ATP-binding</keyword>
<keyword id="KW-0963">Cytoplasm</keyword>
<keyword id="KW-0418">Kinase</keyword>
<keyword id="KW-0547">Nucleotide-binding</keyword>
<keyword id="KW-1185">Reference proteome</keyword>
<keyword id="KW-0808">Transferase</keyword>
<feature type="chain" id="PRO_0000335649" description="Acetylglutamate kinase">
    <location>
        <begin position="1"/>
        <end position="312"/>
    </location>
</feature>
<feature type="binding site" evidence="1">
    <location>
        <begin position="74"/>
        <end position="75"/>
    </location>
    <ligand>
        <name>substrate</name>
    </ligand>
</feature>
<feature type="binding site" evidence="1">
    <location>
        <position position="96"/>
    </location>
    <ligand>
        <name>substrate</name>
    </ligand>
</feature>
<feature type="binding site" evidence="1">
    <location>
        <position position="195"/>
    </location>
    <ligand>
        <name>substrate</name>
    </ligand>
</feature>
<feature type="site" description="Transition state stabilizer" evidence="1">
    <location>
        <position position="39"/>
    </location>
</feature>
<feature type="site" description="Transition state stabilizer" evidence="1">
    <location>
        <position position="256"/>
    </location>
</feature>
<name>ARGB_NOCSJ</name>